<accession>Q7VLR8</accession>
<gene>
    <name evidence="1" type="primary">ihfB</name>
    <name evidence="1" type="synonym">himD</name>
    <name type="ordered locus">HD_1353</name>
</gene>
<dbReference type="EMBL" id="AE017143">
    <property type="protein sequence ID" value="AAP96167.1"/>
    <property type="molecule type" value="Genomic_DNA"/>
</dbReference>
<dbReference type="RefSeq" id="WP_010945216.1">
    <property type="nucleotide sequence ID" value="NC_002940.2"/>
</dbReference>
<dbReference type="SMR" id="Q7VLR8"/>
<dbReference type="STRING" id="233412.HD_1353"/>
<dbReference type="GeneID" id="60732712"/>
<dbReference type="KEGG" id="hdu:HD_1353"/>
<dbReference type="eggNOG" id="COG0776">
    <property type="taxonomic scope" value="Bacteria"/>
</dbReference>
<dbReference type="HOGENOM" id="CLU_105066_2_0_6"/>
<dbReference type="OrthoDB" id="9804203at2"/>
<dbReference type="Proteomes" id="UP000001022">
    <property type="component" value="Chromosome"/>
</dbReference>
<dbReference type="GO" id="GO:0005694">
    <property type="term" value="C:chromosome"/>
    <property type="evidence" value="ECO:0007669"/>
    <property type="project" value="InterPro"/>
</dbReference>
<dbReference type="GO" id="GO:0005829">
    <property type="term" value="C:cytosol"/>
    <property type="evidence" value="ECO:0007669"/>
    <property type="project" value="TreeGrafter"/>
</dbReference>
<dbReference type="GO" id="GO:0003677">
    <property type="term" value="F:DNA binding"/>
    <property type="evidence" value="ECO:0007669"/>
    <property type="project" value="UniProtKB-UniRule"/>
</dbReference>
<dbReference type="GO" id="GO:0030527">
    <property type="term" value="F:structural constituent of chromatin"/>
    <property type="evidence" value="ECO:0007669"/>
    <property type="project" value="InterPro"/>
</dbReference>
<dbReference type="GO" id="GO:0006310">
    <property type="term" value="P:DNA recombination"/>
    <property type="evidence" value="ECO:0007669"/>
    <property type="project" value="UniProtKB-UniRule"/>
</dbReference>
<dbReference type="GO" id="GO:0006355">
    <property type="term" value="P:regulation of DNA-templated transcription"/>
    <property type="evidence" value="ECO:0007669"/>
    <property type="project" value="UniProtKB-UniRule"/>
</dbReference>
<dbReference type="GO" id="GO:0006417">
    <property type="term" value="P:regulation of translation"/>
    <property type="evidence" value="ECO:0007669"/>
    <property type="project" value="UniProtKB-UniRule"/>
</dbReference>
<dbReference type="CDD" id="cd13836">
    <property type="entry name" value="IHF_B"/>
    <property type="match status" value="1"/>
</dbReference>
<dbReference type="Gene3D" id="4.10.520.10">
    <property type="entry name" value="IHF-like DNA-binding proteins"/>
    <property type="match status" value="1"/>
</dbReference>
<dbReference type="HAMAP" id="MF_00381">
    <property type="entry name" value="IHF_beta"/>
    <property type="match status" value="1"/>
</dbReference>
<dbReference type="InterPro" id="IPR000119">
    <property type="entry name" value="Hist_DNA-bd"/>
</dbReference>
<dbReference type="InterPro" id="IPR020816">
    <property type="entry name" value="Histone-like_DNA-bd_CS"/>
</dbReference>
<dbReference type="InterPro" id="IPR010992">
    <property type="entry name" value="IHF-like_DNA-bd_dom_sf"/>
</dbReference>
<dbReference type="InterPro" id="IPR005685">
    <property type="entry name" value="IHF_beta"/>
</dbReference>
<dbReference type="NCBIfam" id="TIGR00988">
    <property type="entry name" value="hip"/>
    <property type="match status" value="1"/>
</dbReference>
<dbReference type="NCBIfam" id="NF001222">
    <property type="entry name" value="PRK00199.1"/>
    <property type="match status" value="1"/>
</dbReference>
<dbReference type="PANTHER" id="PTHR33175">
    <property type="entry name" value="DNA-BINDING PROTEIN HU"/>
    <property type="match status" value="1"/>
</dbReference>
<dbReference type="PANTHER" id="PTHR33175:SF5">
    <property type="entry name" value="INTEGRATION HOST FACTOR SUBUNIT BETA"/>
    <property type="match status" value="1"/>
</dbReference>
<dbReference type="Pfam" id="PF00216">
    <property type="entry name" value="Bac_DNA_binding"/>
    <property type="match status" value="1"/>
</dbReference>
<dbReference type="PRINTS" id="PR01727">
    <property type="entry name" value="DNABINDINGHU"/>
</dbReference>
<dbReference type="SMART" id="SM00411">
    <property type="entry name" value="BHL"/>
    <property type="match status" value="1"/>
</dbReference>
<dbReference type="SUPFAM" id="SSF47729">
    <property type="entry name" value="IHF-like DNA-binding proteins"/>
    <property type="match status" value="1"/>
</dbReference>
<dbReference type="PROSITE" id="PS00045">
    <property type="entry name" value="HISTONE_LIKE"/>
    <property type="match status" value="1"/>
</dbReference>
<name>IHFB_HAEDU</name>
<organism>
    <name type="scientific">Haemophilus ducreyi (strain 35000HP / ATCC 700724)</name>
    <dbReference type="NCBI Taxonomy" id="233412"/>
    <lineage>
        <taxon>Bacteria</taxon>
        <taxon>Pseudomonadati</taxon>
        <taxon>Pseudomonadota</taxon>
        <taxon>Gammaproteobacteria</taxon>
        <taxon>Pasteurellales</taxon>
        <taxon>Pasteurellaceae</taxon>
        <taxon>Haemophilus</taxon>
    </lineage>
</organism>
<reference key="1">
    <citation type="submission" date="2003-06" db="EMBL/GenBank/DDBJ databases">
        <title>The complete genome sequence of Haemophilus ducreyi.</title>
        <authorList>
            <person name="Munson R.S. Jr."/>
            <person name="Ray W.C."/>
            <person name="Mahairas G."/>
            <person name="Sabo P."/>
            <person name="Mungur R."/>
            <person name="Johnson L."/>
            <person name="Nguyen D."/>
            <person name="Wang J."/>
            <person name="Forst C."/>
            <person name="Hood L."/>
        </authorList>
    </citation>
    <scope>NUCLEOTIDE SEQUENCE [LARGE SCALE GENOMIC DNA]</scope>
    <source>
        <strain>35000HP / ATCC 700724</strain>
    </source>
</reference>
<proteinExistence type="inferred from homology"/>
<comment type="function">
    <text evidence="1">This protein is one of the two subunits of integration host factor, a specific DNA-binding protein that functions in genetic recombination as well as in transcriptional and translational control.</text>
</comment>
<comment type="subunit">
    <text evidence="1">Heterodimer of an alpha and a beta chain.</text>
</comment>
<comment type="similarity">
    <text evidence="1">Belongs to the bacterial histone-like protein family.</text>
</comment>
<protein>
    <recommendedName>
        <fullName evidence="1">Integration host factor subunit beta</fullName>
        <shortName evidence="1">IHF-beta</shortName>
    </recommendedName>
</protein>
<evidence type="ECO:0000255" key="1">
    <source>
        <dbReference type="HAMAP-Rule" id="MF_00381"/>
    </source>
</evidence>
<feature type="chain" id="PRO_0000105052" description="Integration host factor subunit beta">
    <location>
        <begin position="1"/>
        <end position="93"/>
    </location>
</feature>
<sequence length="93" mass="10487">MTKSELIEKLIALNPSLPEKAVEDGVKDILENIMLTLEQAKRVEIRGFGSFSLHYRQPRIGRNPKTGASVKLDAKYVPHFKAGKDLKERVDLV</sequence>
<keyword id="KW-0233">DNA recombination</keyword>
<keyword id="KW-0238">DNA-binding</keyword>
<keyword id="KW-1185">Reference proteome</keyword>
<keyword id="KW-0804">Transcription</keyword>
<keyword id="KW-0805">Transcription regulation</keyword>
<keyword id="KW-0810">Translation regulation</keyword>